<organism>
    <name type="scientific">Mesorhizobium japonicum (strain LMG 29417 / CECT 9101 / MAFF 303099)</name>
    <name type="common">Mesorhizobium loti (strain MAFF 303099)</name>
    <dbReference type="NCBI Taxonomy" id="266835"/>
    <lineage>
        <taxon>Bacteria</taxon>
        <taxon>Pseudomonadati</taxon>
        <taxon>Pseudomonadota</taxon>
        <taxon>Alphaproteobacteria</taxon>
        <taxon>Hyphomicrobiales</taxon>
        <taxon>Phyllobacteriaceae</taxon>
        <taxon>Mesorhizobium</taxon>
    </lineage>
</organism>
<dbReference type="EC" id="2.7.1.167" evidence="1"/>
<dbReference type="EC" id="2.7.7.70" evidence="1"/>
<dbReference type="EMBL" id="BA000012">
    <property type="protein sequence ID" value="BAB49662.1"/>
    <property type="molecule type" value="Genomic_DNA"/>
</dbReference>
<dbReference type="RefSeq" id="WP_010911014.1">
    <property type="nucleotide sequence ID" value="NC_002678.2"/>
</dbReference>
<dbReference type="SMR" id="Q98I54"/>
<dbReference type="KEGG" id="mlo:mll2562"/>
<dbReference type="PATRIC" id="fig|266835.9.peg.2056"/>
<dbReference type="eggNOG" id="COG0615">
    <property type="taxonomic scope" value="Bacteria"/>
</dbReference>
<dbReference type="eggNOG" id="COG2870">
    <property type="taxonomic scope" value="Bacteria"/>
</dbReference>
<dbReference type="HOGENOM" id="CLU_021150_2_1_5"/>
<dbReference type="UniPathway" id="UPA00356">
    <property type="reaction ID" value="UER00437"/>
</dbReference>
<dbReference type="UniPathway" id="UPA00356">
    <property type="reaction ID" value="UER00439"/>
</dbReference>
<dbReference type="Proteomes" id="UP000000552">
    <property type="component" value="Chromosome"/>
</dbReference>
<dbReference type="GO" id="GO:0005829">
    <property type="term" value="C:cytosol"/>
    <property type="evidence" value="ECO:0007669"/>
    <property type="project" value="TreeGrafter"/>
</dbReference>
<dbReference type="GO" id="GO:0005524">
    <property type="term" value="F:ATP binding"/>
    <property type="evidence" value="ECO:0007669"/>
    <property type="project" value="UniProtKB-UniRule"/>
</dbReference>
<dbReference type="GO" id="GO:0033785">
    <property type="term" value="F:heptose 7-phosphate kinase activity"/>
    <property type="evidence" value="ECO:0007669"/>
    <property type="project" value="UniProtKB-UniRule"/>
</dbReference>
<dbReference type="GO" id="GO:0033786">
    <property type="term" value="F:heptose-1-phosphate adenylyltransferase activity"/>
    <property type="evidence" value="ECO:0007669"/>
    <property type="project" value="UniProtKB-UniRule"/>
</dbReference>
<dbReference type="GO" id="GO:0016773">
    <property type="term" value="F:phosphotransferase activity, alcohol group as acceptor"/>
    <property type="evidence" value="ECO:0007669"/>
    <property type="project" value="InterPro"/>
</dbReference>
<dbReference type="GO" id="GO:0097171">
    <property type="term" value="P:ADP-L-glycero-beta-D-manno-heptose biosynthetic process"/>
    <property type="evidence" value="ECO:0007669"/>
    <property type="project" value="UniProtKB-UniPathway"/>
</dbReference>
<dbReference type="CDD" id="cd01172">
    <property type="entry name" value="RfaE_like"/>
    <property type="match status" value="1"/>
</dbReference>
<dbReference type="Gene3D" id="3.40.1190.20">
    <property type="match status" value="1"/>
</dbReference>
<dbReference type="Gene3D" id="3.40.50.620">
    <property type="entry name" value="HUPs"/>
    <property type="match status" value="1"/>
</dbReference>
<dbReference type="HAMAP" id="MF_01603">
    <property type="entry name" value="HldE"/>
    <property type="match status" value="1"/>
</dbReference>
<dbReference type="InterPro" id="IPR023030">
    <property type="entry name" value="Bifunc_HldE"/>
</dbReference>
<dbReference type="InterPro" id="IPR004821">
    <property type="entry name" value="Cyt_trans-like"/>
</dbReference>
<dbReference type="InterPro" id="IPR011611">
    <property type="entry name" value="PfkB_dom"/>
</dbReference>
<dbReference type="InterPro" id="IPR011913">
    <property type="entry name" value="RfaE_dom_I"/>
</dbReference>
<dbReference type="InterPro" id="IPR011914">
    <property type="entry name" value="RfaE_dom_II"/>
</dbReference>
<dbReference type="InterPro" id="IPR029056">
    <property type="entry name" value="Ribokinase-like"/>
</dbReference>
<dbReference type="InterPro" id="IPR014729">
    <property type="entry name" value="Rossmann-like_a/b/a_fold"/>
</dbReference>
<dbReference type="NCBIfam" id="TIGR00125">
    <property type="entry name" value="cyt_tran_rel"/>
    <property type="match status" value="1"/>
</dbReference>
<dbReference type="NCBIfam" id="TIGR02198">
    <property type="entry name" value="rfaE_dom_I"/>
    <property type="match status" value="1"/>
</dbReference>
<dbReference type="NCBIfam" id="TIGR02199">
    <property type="entry name" value="rfaE_dom_II"/>
    <property type="match status" value="1"/>
</dbReference>
<dbReference type="PANTHER" id="PTHR46969">
    <property type="entry name" value="BIFUNCTIONAL PROTEIN HLDE"/>
    <property type="match status" value="1"/>
</dbReference>
<dbReference type="PANTHER" id="PTHR46969:SF1">
    <property type="entry name" value="BIFUNCTIONAL PROTEIN HLDE"/>
    <property type="match status" value="1"/>
</dbReference>
<dbReference type="Pfam" id="PF01467">
    <property type="entry name" value="CTP_transf_like"/>
    <property type="match status" value="1"/>
</dbReference>
<dbReference type="Pfam" id="PF00294">
    <property type="entry name" value="PfkB"/>
    <property type="match status" value="1"/>
</dbReference>
<dbReference type="SUPFAM" id="SSF52374">
    <property type="entry name" value="Nucleotidylyl transferase"/>
    <property type="match status" value="1"/>
</dbReference>
<dbReference type="SUPFAM" id="SSF53613">
    <property type="entry name" value="Ribokinase-like"/>
    <property type="match status" value="1"/>
</dbReference>
<name>HLDE_RHILO</name>
<reference key="1">
    <citation type="journal article" date="2000" name="DNA Res.">
        <title>Complete genome structure of the nitrogen-fixing symbiotic bacterium Mesorhizobium loti.</title>
        <authorList>
            <person name="Kaneko T."/>
            <person name="Nakamura Y."/>
            <person name="Sato S."/>
            <person name="Asamizu E."/>
            <person name="Kato T."/>
            <person name="Sasamoto S."/>
            <person name="Watanabe A."/>
            <person name="Idesawa K."/>
            <person name="Ishikawa A."/>
            <person name="Kawashima K."/>
            <person name="Kimura T."/>
            <person name="Kishida Y."/>
            <person name="Kiyokawa C."/>
            <person name="Kohara M."/>
            <person name="Matsumoto M."/>
            <person name="Matsuno A."/>
            <person name="Mochizuki Y."/>
            <person name="Nakayama S."/>
            <person name="Nakazaki N."/>
            <person name="Shimpo S."/>
            <person name="Sugimoto M."/>
            <person name="Takeuchi C."/>
            <person name="Yamada M."/>
            <person name="Tabata S."/>
        </authorList>
    </citation>
    <scope>NUCLEOTIDE SEQUENCE [LARGE SCALE GENOMIC DNA]</scope>
    <source>
        <strain>LMG 29417 / CECT 9101 / MAFF 303099</strain>
    </source>
</reference>
<protein>
    <recommendedName>
        <fullName evidence="1">Bifunctional protein HldE</fullName>
    </recommendedName>
    <domain>
        <recommendedName>
            <fullName evidence="1">D-beta-D-heptose 7-phosphate kinase</fullName>
            <ecNumber evidence="1">2.7.1.167</ecNumber>
        </recommendedName>
        <alternativeName>
            <fullName evidence="1">D-beta-D-heptose 7-phosphotransferase</fullName>
        </alternativeName>
        <alternativeName>
            <fullName evidence="1">D-glycero-beta-D-manno-heptose-7-phosphate kinase</fullName>
        </alternativeName>
    </domain>
    <domain>
        <recommendedName>
            <fullName evidence="1">D-beta-D-heptose 1-phosphate adenylyltransferase</fullName>
            <ecNumber evidence="1">2.7.7.70</ecNumber>
        </recommendedName>
        <alternativeName>
            <fullName evidence="1">D-glycero-beta-D-manno-heptose 1-phosphate adenylyltransferase</fullName>
        </alternativeName>
    </domain>
</protein>
<gene>
    <name evidence="1" type="primary">hldE</name>
    <name type="synonym">rfaE</name>
    <name type="ordered locus">mll2562</name>
</gene>
<accession>Q98I54</accession>
<proteinExistence type="inferred from homology"/>
<feature type="chain" id="PRO_0000080122" description="Bifunctional protein HldE">
    <location>
        <begin position="1"/>
        <end position="496"/>
    </location>
</feature>
<feature type="region of interest" description="Ribokinase">
    <location>
        <begin position="1"/>
        <end position="335"/>
    </location>
</feature>
<feature type="region of interest" description="Cytidylyltransferase">
    <location>
        <begin position="363"/>
        <end position="496"/>
    </location>
</feature>
<feature type="active site" evidence="1">
    <location>
        <position position="280"/>
    </location>
</feature>
<feature type="binding site" evidence="1">
    <location>
        <begin position="211"/>
        <end position="214"/>
    </location>
    <ligand>
        <name>ATP</name>
        <dbReference type="ChEBI" id="CHEBI:30616"/>
    </ligand>
</feature>
<keyword id="KW-0067">ATP-binding</keyword>
<keyword id="KW-0119">Carbohydrate metabolism</keyword>
<keyword id="KW-0418">Kinase</keyword>
<keyword id="KW-0511">Multifunctional enzyme</keyword>
<keyword id="KW-0547">Nucleotide-binding</keyword>
<keyword id="KW-0548">Nucleotidyltransferase</keyword>
<keyword id="KW-0808">Transferase</keyword>
<comment type="function">
    <text evidence="1">Catalyzes the phosphorylation of D-glycero-D-manno-heptose 7-phosphate at the C-1 position to selectively form D-glycero-beta-D-manno-heptose-1,7-bisphosphate.</text>
</comment>
<comment type="function">
    <text evidence="1">Catalyzes the ADP transfer from ATP to D-glycero-beta-D-manno-heptose 1-phosphate, yielding ADP-D-glycero-beta-D-manno-heptose.</text>
</comment>
<comment type="catalytic activity">
    <reaction evidence="1">
        <text>D-glycero-beta-D-manno-heptose 7-phosphate + ATP = D-glycero-beta-D-manno-heptose 1,7-bisphosphate + ADP + H(+)</text>
        <dbReference type="Rhea" id="RHEA:27473"/>
        <dbReference type="ChEBI" id="CHEBI:15378"/>
        <dbReference type="ChEBI" id="CHEBI:30616"/>
        <dbReference type="ChEBI" id="CHEBI:60204"/>
        <dbReference type="ChEBI" id="CHEBI:60208"/>
        <dbReference type="ChEBI" id="CHEBI:456216"/>
        <dbReference type="EC" id="2.7.1.167"/>
    </reaction>
</comment>
<comment type="catalytic activity">
    <reaction evidence="1">
        <text>D-glycero-beta-D-manno-heptose 1-phosphate + ATP + H(+) = ADP-D-glycero-beta-D-manno-heptose + diphosphate</text>
        <dbReference type="Rhea" id="RHEA:27465"/>
        <dbReference type="ChEBI" id="CHEBI:15378"/>
        <dbReference type="ChEBI" id="CHEBI:30616"/>
        <dbReference type="ChEBI" id="CHEBI:33019"/>
        <dbReference type="ChEBI" id="CHEBI:59967"/>
        <dbReference type="ChEBI" id="CHEBI:61593"/>
        <dbReference type="EC" id="2.7.7.70"/>
    </reaction>
</comment>
<comment type="pathway">
    <text evidence="1">Nucleotide-sugar biosynthesis; ADP-L-glycero-beta-D-manno-heptose biosynthesis; ADP-L-glycero-beta-D-manno-heptose from D-glycero-beta-D-manno-heptose 7-phosphate: step 1/4.</text>
</comment>
<comment type="pathway">
    <text evidence="1">Nucleotide-sugar biosynthesis; ADP-L-glycero-beta-D-manno-heptose biosynthesis; ADP-L-glycero-beta-D-manno-heptose from D-glycero-beta-D-manno-heptose 7-phosphate: step 3/4.</text>
</comment>
<comment type="subunit">
    <text evidence="1">Homodimer.</text>
</comment>
<comment type="similarity">
    <text evidence="1">In the N-terminal section; belongs to the carbohydrate kinase PfkB family.</text>
</comment>
<comment type="similarity">
    <text evidence="1">In the C-terminal section; belongs to the cytidylyltransferase family.</text>
</comment>
<sequence>MIKHNPPSPEPLHRAIARFGGVTVLVVGDLILDRFVNGVIERISPEAPIPVLHGRGETSAMGGAGNVVANIVSLGARAIPVSVIGTDTAGDSLVRMLAELGAETAGLSQQRGRMTSSKSRFSALNQQVLRFDEEEIKPLDETERAGLIRHFRAALAGAEIVILSDYGKGILLDGVAAELIAICREAGKPVLVDPKGRDYARYAGATAITPNRKELGEAVGHAVFADDEIVAAARELISAHGFDFVVATRSEKGMSVVGPDEARHIATQAREVFDVSGAGDTVIATFALALASGADPVAAASIANAAGGVVVGKRGTARLTVEELTGALFRSHGPTAHKDAILDASSAARMVAAWKEEGLSVGFTNGCFDILHAGHVSLLHAARSQCDRLVLGLNSDASVRRLKGPGRPVNDQHDRACVLAALASVDAVVVFEEDTPLALIEALLPDILVKGADYTIDTVVGADVVQKAGGRVVLVDLVAGKSTTGTIGKLRAGSTS</sequence>
<evidence type="ECO:0000255" key="1">
    <source>
        <dbReference type="HAMAP-Rule" id="MF_01603"/>
    </source>
</evidence>